<gene>
    <name evidence="1" type="primary">rplA</name>
    <name type="ordered locus">Ping_3449</name>
</gene>
<keyword id="KW-1185">Reference proteome</keyword>
<keyword id="KW-0678">Repressor</keyword>
<keyword id="KW-0687">Ribonucleoprotein</keyword>
<keyword id="KW-0689">Ribosomal protein</keyword>
<keyword id="KW-0694">RNA-binding</keyword>
<keyword id="KW-0699">rRNA-binding</keyword>
<keyword id="KW-0810">Translation regulation</keyword>
<keyword id="KW-0820">tRNA-binding</keyword>
<protein>
    <recommendedName>
        <fullName evidence="1">Large ribosomal subunit protein uL1</fullName>
    </recommendedName>
    <alternativeName>
        <fullName evidence="2">50S ribosomal protein L1</fullName>
    </alternativeName>
</protein>
<feature type="chain" id="PRO_0000308080" description="Large ribosomal subunit protein uL1">
    <location>
        <begin position="1"/>
        <end position="234"/>
    </location>
</feature>
<dbReference type="EMBL" id="CP000510">
    <property type="protein sequence ID" value="ABM05133.1"/>
    <property type="molecule type" value="Genomic_DNA"/>
</dbReference>
<dbReference type="RefSeq" id="WP_011771685.1">
    <property type="nucleotide sequence ID" value="NC_008709.1"/>
</dbReference>
<dbReference type="SMR" id="A1T068"/>
<dbReference type="STRING" id="357804.Ping_3449"/>
<dbReference type="KEGG" id="pin:Ping_3449"/>
<dbReference type="eggNOG" id="COG0081">
    <property type="taxonomic scope" value="Bacteria"/>
</dbReference>
<dbReference type="HOGENOM" id="CLU_062853_0_0_6"/>
<dbReference type="OrthoDB" id="9803740at2"/>
<dbReference type="Proteomes" id="UP000000639">
    <property type="component" value="Chromosome"/>
</dbReference>
<dbReference type="GO" id="GO:0022625">
    <property type="term" value="C:cytosolic large ribosomal subunit"/>
    <property type="evidence" value="ECO:0007669"/>
    <property type="project" value="TreeGrafter"/>
</dbReference>
<dbReference type="GO" id="GO:0019843">
    <property type="term" value="F:rRNA binding"/>
    <property type="evidence" value="ECO:0007669"/>
    <property type="project" value="UniProtKB-UniRule"/>
</dbReference>
<dbReference type="GO" id="GO:0003735">
    <property type="term" value="F:structural constituent of ribosome"/>
    <property type="evidence" value="ECO:0007669"/>
    <property type="project" value="InterPro"/>
</dbReference>
<dbReference type="GO" id="GO:0000049">
    <property type="term" value="F:tRNA binding"/>
    <property type="evidence" value="ECO:0007669"/>
    <property type="project" value="UniProtKB-KW"/>
</dbReference>
<dbReference type="GO" id="GO:0006417">
    <property type="term" value="P:regulation of translation"/>
    <property type="evidence" value="ECO:0007669"/>
    <property type="project" value="UniProtKB-KW"/>
</dbReference>
<dbReference type="GO" id="GO:0006412">
    <property type="term" value="P:translation"/>
    <property type="evidence" value="ECO:0007669"/>
    <property type="project" value="UniProtKB-UniRule"/>
</dbReference>
<dbReference type="CDD" id="cd00403">
    <property type="entry name" value="Ribosomal_L1"/>
    <property type="match status" value="1"/>
</dbReference>
<dbReference type="FunFam" id="3.40.50.790:FF:000001">
    <property type="entry name" value="50S ribosomal protein L1"/>
    <property type="match status" value="1"/>
</dbReference>
<dbReference type="Gene3D" id="3.30.190.20">
    <property type="match status" value="1"/>
</dbReference>
<dbReference type="Gene3D" id="3.40.50.790">
    <property type="match status" value="1"/>
</dbReference>
<dbReference type="HAMAP" id="MF_01318_B">
    <property type="entry name" value="Ribosomal_uL1_B"/>
    <property type="match status" value="1"/>
</dbReference>
<dbReference type="InterPro" id="IPR005878">
    <property type="entry name" value="Ribosom_uL1_bac-type"/>
</dbReference>
<dbReference type="InterPro" id="IPR002143">
    <property type="entry name" value="Ribosomal_uL1"/>
</dbReference>
<dbReference type="InterPro" id="IPR023674">
    <property type="entry name" value="Ribosomal_uL1-like"/>
</dbReference>
<dbReference type="InterPro" id="IPR028364">
    <property type="entry name" value="Ribosomal_uL1/biogenesis"/>
</dbReference>
<dbReference type="InterPro" id="IPR016095">
    <property type="entry name" value="Ribosomal_uL1_3-a/b-sand"/>
</dbReference>
<dbReference type="InterPro" id="IPR023673">
    <property type="entry name" value="Ribosomal_uL1_CS"/>
</dbReference>
<dbReference type="NCBIfam" id="TIGR01169">
    <property type="entry name" value="rplA_bact"/>
    <property type="match status" value="1"/>
</dbReference>
<dbReference type="PANTHER" id="PTHR36427">
    <property type="entry name" value="54S RIBOSOMAL PROTEIN L1, MITOCHONDRIAL"/>
    <property type="match status" value="1"/>
</dbReference>
<dbReference type="PANTHER" id="PTHR36427:SF3">
    <property type="entry name" value="LARGE RIBOSOMAL SUBUNIT PROTEIN UL1M"/>
    <property type="match status" value="1"/>
</dbReference>
<dbReference type="Pfam" id="PF00687">
    <property type="entry name" value="Ribosomal_L1"/>
    <property type="match status" value="1"/>
</dbReference>
<dbReference type="PIRSF" id="PIRSF002155">
    <property type="entry name" value="Ribosomal_L1"/>
    <property type="match status" value="1"/>
</dbReference>
<dbReference type="SUPFAM" id="SSF56808">
    <property type="entry name" value="Ribosomal protein L1"/>
    <property type="match status" value="1"/>
</dbReference>
<dbReference type="PROSITE" id="PS01199">
    <property type="entry name" value="RIBOSOMAL_L1"/>
    <property type="match status" value="1"/>
</dbReference>
<sequence>MAKLSKRMKLVRDSVDASKEYEINEAVVLLQKLATAKFTESIDVSVNLGVDPRRSDQNVRGATVLPHGTGRTVRVAVFTQGANAEAAKAAGADIVGMDDLAAQVKAGELNFDVVIASPDAMRVVGQLGQILGPRGLMPNPKVGTVTPDVATAVKNAKAGQIRYRNDKNGIIHSTIGKVTFTPVQIRENLEALLAALIKGKPSGAKGQFLKRISLSTTMGAGLKVDTSSVKATVA</sequence>
<reference key="1">
    <citation type="journal article" date="2008" name="BMC Genomics">
        <title>Genomics of an extreme psychrophile, Psychromonas ingrahamii.</title>
        <authorList>
            <person name="Riley M."/>
            <person name="Staley J.T."/>
            <person name="Danchin A."/>
            <person name="Wang T.Z."/>
            <person name="Brettin T.S."/>
            <person name="Hauser L.J."/>
            <person name="Land M.L."/>
            <person name="Thompson L.S."/>
        </authorList>
    </citation>
    <scope>NUCLEOTIDE SEQUENCE [LARGE SCALE GENOMIC DNA]</scope>
    <source>
        <strain>DSM 17664 / CCUG 51855 / 37</strain>
    </source>
</reference>
<evidence type="ECO:0000255" key="1">
    <source>
        <dbReference type="HAMAP-Rule" id="MF_01318"/>
    </source>
</evidence>
<evidence type="ECO:0000305" key="2"/>
<proteinExistence type="inferred from homology"/>
<accession>A1T068</accession>
<organism>
    <name type="scientific">Psychromonas ingrahamii (strain DSM 17664 / CCUG 51855 / 37)</name>
    <dbReference type="NCBI Taxonomy" id="357804"/>
    <lineage>
        <taxon>Bacteria</taxon>
        <taxon>Pseudomonadati</taxon>
        <taxon>Pseudomonadota</taxon>
        <taxon>Gammaproteobacteria</taxon>
        <taxon>Alteromonadales</taxon>
        <taxon>Psychromonadaceae</taxon>
        <taxon>Psychromonas</taxon>
    </lineage>
</organism>
<name>RL1_PSYIN</name>
<comment type="function">
    <text evidence="1">Binds directly to 23S rRNA. The L1 stalk is quite mobile in the ribosome, and is involved in E site tRNA release.</text>
</comment>
<comment type="function">
    <text evidence="1">Protein L1 is also a translational repressor protein, it controls the translation of the L11 operon by binding to its mRNA.</text>
</comment>
<comment type="subunit">
    <text evidence="1">Part of the 50S ribosomal subunit.</text>
</comment>
<comment type="similarity">
    <text evidence="1">Belongs to the universal ribosomal protein uL1 family.</text>
</comment>